<keyword id="KW-0210">Decarboxylase</keyword>
<keyword id="KW-0456">Lyase</keyword>
<keyword id="KW-0665">Pyrimidine biosynthesis</keyword>
<keyword id="KW-1185">Reference proteome</keyword>
<organism>
    <name type="scientific">Buchnera aphidicola subsp. Acyrthosiphon pisum (strain APS)</name>
    <name type="common">Acyrthosiphon pisum symbiotic bacterium</name>
    <dbReference type="NCBI Taxonomy" id="107806"/>
    <lineage>
        <taxon>Bacteria</taxon>
        <taxon>Pseudomonadati</taxon>
        <taxon>Pseudomonadota</taxon>
        <taxon>Gammaproteobacteria</taxon>
        <taxon>Enterobacterales</taxon>
        <taxon>Erwiniaceae</taxon>
        <taxon>Buchnera</taxon>
    </lineage>
</organism>
<proteinExistence type="inferred from homology"/>
<comment type="function">
    <text evidence="1">Catalyzes the decarboxylation of orotidine 5'-monophosphate (OMP) to uridine 5'-monophosphate (UMP).</text>
</comment>
<comment type="catalytic activity">
    <reaction evidence="1">
        <text>orotidine 5'-phosphate + H(+) = UMP + CO2</text>
        <dbReference type="Rhea" id="RHEA:11596"/>
        <dbReference type="ChEBI" id="CHEBI:15378"/>
        <dbReference type="ChEBI" id="CHEBI:16526"/>
        <dbReference type="ChEBI" id="CHEBI:57538"/>
        <dbReference type="ChEBI" id="CHEBI:57865"/>
        <dbReference type="EC" id="4.1.1.23"/>
    </reaction>
</comment>
<comment type="pathway">
    <text evidence="1">Pyrimidine metabolism; UMP biosynthesis via de novo pathway; UMP from orotate: step 2/2.</text>
</comment>
<comment type="subunit">
    <text evidence="1">Homodimer.</text>
</comment>
<comment type="similarity">
    <text evidence="1">Belongs to the OMP decarboxylase family. Type 1 subfamily.</text>
</comment>
<name>PYRF_BUCAI</name>
<gene>
    <name evidence="1" type="primary">pyrF</name>
    <name type="ordered locus">BU270</name>
</gene>
<sequence length="236" mass="26480">MLNPNIFHMPKIIIALDFCNKKSAMKLVNLLNPSIFYLKIGKEMFTILGCKFVKELHQLGFNIFLDLKFHDIPNTVFNATKAAADLGIWMLSVHASGGKEMLISAKKALKSFKKAPLLIAVTALTSFKEEALKEIGINISLTEYILKLSKLSNDCGLDGIVCPGKEAKKIKFLFGNKYKIITPGIRIAKDLLYDQNNIITPKEAKEYKIDYIVIGRSITMSKNPIKKLDLIIKSMQ</sequence>
<reference key="1">
    <citation type="journal article" date="2000" name="Nature">
        <title>Genome sequence of the endocellular bacterial symbiont of aphids Buchnera sp. APS.</title>
        <authorList>
            <person name="Shigenobu S."/>
            <person name="Watanabe H."/>
            <person name="Hattori M."/>
            <person name="Sakaki Y."/>
            <person name="Ishikawa H."/>
        </authorList>
    </citation>
    <scope>NUCLEOTIDE SEQUENCE [LARGE SCALE GENOMIC DNA]</scope>
    <source>
        <strain>APS</strain>
    </source>
</reference>
<protein>
    <recommendedName>
        <fullName evidence="1">Orotidine 5'-phosphate decarboxylase</fullName>
        <ecNumber evidence="1">4.1.1.23</ecNumber>
    </recommendedName>
    <alternativeName>
        <fullName evidence="1">OMP decarboxylase</fullName>
        <shortName evidence="1">OMPDCase</shortName>
        <shortName evidence="1">OMPdecase</shortName>
    </alternativeName>
</protein>
<feature type="chain" id="PRO_0000134532" description="Orotidine 5'-phosphate decarboxylase">
    <location>
        <begin position="1"/>
        <end position="236"/>
    </location>
</feature>
<feature type="active site" description="Proton donor" evidence="1">
    <location>
        <position position="68"/>
    </location>
</feature>
<feature type="binding site" evidence="1">
    <location>
        <position position="17"/>
    </location>
    <ligand>
        <name>substrate</name>
    </ligand>
</feature>
<feature type="binding site" evidence="1">
    <location>
        <position position="39"/>
    </location>
    <ligand>
        <name>substrate</name>
    </ligand>
</feature>
<feature type="binding site" evidence="1">
    <location>
        <begin position="66"/>
        <end position="75"/>
    </location>
    <ligand>
        <name>substrate</name>
    </ligand>
</feature>
<feature type="binding site" evidence="1">
    <location>
        <position position="125"/>
    </location>
    <ligand>
        <name>substrate</name>
    </ligand>
</feature>
<feature type="binding site" evidence="1">
    <location>
        <position position="186"/>
    </location>
    <ligand>
        <name>substrate</name>
    </ligand>
</feature>
<feature type="binding site" evidence="1">
    <location>
        <position position="195"/>
    </location>
    <ligand>
        <name>substrate</name>
    </ligand>
</feature>
<feature type="binding site" evidence="1">
    <location>
        <position position="215"/>
    </location>
    <ligand>
        <name>substrate</name>
    </ligand>
</feature>
<feature type="binding site" evidence="1">
    <location>
        <position position="216"/>
    </location>
    <ligand>
        <name>substrate</name>
    </ligand>
</feature>
<dbReference type="EC" id="4.1.1.23" evidence="1"/>
<dbReference type="EMBL" id="BA000003">
    <property type="protein sequence ID" value="BAB12980.1"/>
    <property type="molecule type" value="Genomic_DNA"/>
</dbReference>
<dbReference type="RefSeq" id="NP_240094.1">
    <property type="nucleotide sequence ID" value="NC_002528.1"/>
</dbReference>
<dbReference type="RefSeq" id="WP_010896037.1">
    <property type="nucleotide sequence ID" value="NZ_AP036055.1"/>
</dbReference>
<dbReference type="SMR" id="P57358"/>
<dbReference type="STRING" id="563178.BUAP5A_265"/>
<dbReference type="EnsemblBacteria" id="BAB12980">
    <property type="protein sequence ID" value="BAB12980"/>
    <property type="gene ID" value="BAB12980"/>
</dbReference>
<dbReference type="KEGG" id="buc:BU270"/>
<dbReference type="PATRIC" id="fig|107806.10.peg.280"/>
<dbReference type="eggNOG" id="COG0284">
    <property type="taxonomic scope" value="Bacteria"/>
</dbReference>
<dbReference type="HOGENOM" id="CLU_067069_0_0_6"/>
<dbReference type="UniPathway" id="UPA00070">
    <property type="reaction ID" value="UER00120"/>
</dbReference>
<dbReference type="Proteomes" id="UP000001806">
    <property type="component" value="Chromosome"/>
</dbReference>
<dbReference type="GO" id="GO:0005829">
    <property type="term" value="C:cytosol"/>
    <property type="evidence" value="ECO:0007669"/>
    <property type="project" value="TreeGrafter"/>
</dbReference>
<dbReference type="GO" id="GO:0004590">
    <property type="term" value="F:orotidine-5'-phosphate decarboxylase activity"/>
    <property type="evidence" value="ECO:0007669"/>
    <property type="project" value="UniProtKB-UniRule"/>
</dbReference>
<dbReference type="GO" id="GO:0006207">
    <property type="term" value="P:'de novo' pyrimidine nucleobase biosynthetic process"/>
    <property type="evidence" value="ECO:0007669"/>
    <property type="project" value="InterPro"/>
</dbReference>
<dbReference type="GO" id="GO:0044205">
    <property type="term" value="P:'de novo' UMP biosynthetic process"/>
    <property type="evidence" value="ECO:0007669"/>
    <property type="project" value="UniProtKB-UniRule"/>
</dbReference>
<dbReference type="CDD" id="cd04725">
    <property type="entry name" value="OMP_decarboxylase_like"/>
    <property type="match status" value="1"/>
</dbReference>
<dbReference type="FunFam" id="3.20.20.70:FF:000015">
    <property type="entry name" value="Orotidine 5'-phosphate decarboxylase"/>
    <property type="match status" value="1"/>
</dbReference>
<dbReference type="Gene3D" id="3.20.20.70">
    <property type="entry name" value="Aldolase class I"/>
    <property type="match status" value="1"/>
</dbReference>
<dbReference type="HAMAP" id="MF_01200_B">
    <property type="entry name" value="OMPdecase_type1_B"/>
    <property type="match status" value="1"/>
</dbReference>
<dbReference type="InterPro" id="IPR013785">
    <property type="entry name" value="Aldolase_TIM"/>
</dbReference>
<dbReference type="InterPro" id="IPR014732">
    <property type="entry name" value="OMPdecase"/>
</dbReference>
<dbReference type="InterPro" id="IPR018089">
    <property type="entry name" value="OMPdecase_AS"/>
</dbReference>
<dbReference type="InterPro" id="IPR047596">
    <property type="entry name" value="OMPdecase_bac"/>
</dbReference>
<dbReference type="InterPro" id="IPR001754">
    <property type="entry name" value="OMPdeCOase_dom"/>
</dbReference>
<dbReference type="InterPro" id="IPR011060">
    <property type="entry name" value="RibuloseP-bd_barrel"/>
</dbReference>
<dbReference type="NCBIfam" id="NF001273">
    <property type="entry name" value="PRK00230.1"/>
    <property type="match status" value="1"/>
</dbReference>
<dbReference type="NCBIfam" id="TIGR01740">
    <property type="entry name" value="pyrF"/>
    <property type="match status" value="1"/>
</dbReference>
<dbReference type="PANTHER" id="PTHR32119">
    <property type="entry name" value="OROTIDINE 5'-PHOSPHATE DECARBOXYLASE"/>
    <property type="match status" value="1"/>
</dbReference>
<dbReference type="PANTHER" id="PTHR32119:SF2">
    <property type="entry name" value="OROTIDINE 5'-PHOSPHATE DECARBOXYLASE"/>
    <property type="match status" value="1"/>
</dbReference>
<dbReference type="Pfam" id="PF00215">
    <property type="entry name" value="OMPdecase"/>
    <property type="match status" value="1"/>
</dbReference>
<dbReference type="SMART" id="SM00934">
    <property type="entry name" value="OMPdecase"/>
    <property type="match status" value="1"/>
</dbReference>
<dbReference type="SUPFAM" id="SSF51366">
    <property type="entry name" value="Ribulose-phoshate binding barrel"/>
    <property type="match status" value="1"/>
</dbReference>
<dbReference type="PROSITE" id="PS00156">
    <property type="entry name" value="OMPDECASE"/>
    <property type="match status" value="1"/>
</dbReference>
<accession>P57358</accession>
<evidence type="ECO:0000255" key="1">
    <source>
        <dbReference type="HAMAP-Rule" id="MF_01200"/>
    </source>
</evidence>